<name>HMMR_HUMAN</name>
<organism>
    <name type="scientific">Homo sapiens</name>
    <name type="common">Human</name>
    <dbReference type="NCBI Taxonomy" id="9606"/>
    <lineage>
        <taxon>Eukaryota</taxon>
        <taxon>Metazoa</taxon>
        <taxon>Chordata</taxon>
        <taxon>Craniata</taxon>
        <taxon>Vertebrata</taxon>
        <taxon>Euteleostomi</taxon>
        <taxon>Mammalia</taxon>
        <taxon>Eutheria</taxon>
        <taxon>Euarchontoglires</taxon>
        <taxon>Primates</taxon>
        <taxon>Haplorrhini</taxon>
        <taxon>Catarrhini</taxon>
        <taxon>Hominidae</taxon>
        <taxon>Homo</taxon>
    </lineage>
</organism>
<feature type="chain" id="PRO_0000084007" description="Hyaluronan mediated motility receptor">
    <location>
        <begin position="1"/>
        <end position="724"/>
    </location>
</feature>
<feature type="region of interest" description="Disordered" evidence="3">
    <location>
        <begin position="1"/>
        <end position="22"/>
    </location>
</feature>
<feature type="region of interest" description="Disordered" evidence="3">
    <location>
        <begin position="40"/>
        <end position="81"/>
    </location>
</feature>
<feature type="region of interest" description="Required for interaction with FAM83D" evidence="7">
    <location>
        <begin position="365"/>
        <end position="546"/>
    </location>
</feature>
<feature type="region of interest" description="Hyaluronic acid-binding" evidence="2">
    <location>
        <begin position="635"/>
        <end position="645"/>
    </location>
</feature>
<feature type="region of interest" description="Hyaluronic acid-binding" evidence="2">
    <location>
        <begin position="657"/>
        <end position="666"/>
    </location>
</feature>
<feature type="compositionally biased region" description="Basic and acidic residues" evidence="3">
    <location>
        <begin position="46"/>
        <end position="60"/>
    </location>
</feature>
<feature type="compositionally biased region" description="Basic and acidic residues" evidence="3">
    <location>
        <begin position="70"/>
        <end position="81"/>
    </location>
</feature>
<feature type="modified residue" description="Phosphoserine" evidence="14">
    <location>
        <position position="20"/>
    </location>
</feature>
<feature type="modified residue" description="Phosphothreonine" evidence="15">
    <location>
        <position position="703"/>
    </location>
</feature>
<feature type="glycosylation site" description="N-linked (GlcNAc...) asparagine" evidence="2">
    <location>
        <position position="133"/>
    </location>
</feature>
<feature type="glycosylation site" description="N-linked (GlcNAc...) asparagine" evidence="2">
    <location>
        <position position="477"/>
    </location>
</feature>
<feature type="glycosylation site" description="N-linked (GlcNAc...) asparagine" evidence="2">
    <location>
        <position position="567"/>
    </location>
</feature>
<feature type="glycosylation site" description="N-linked (GlcNAc...) asparagine" evidence="2">
    <location>
        <position position="588"/>
    </location>
</feature>
<feature type="splice variant" id="VSP_041266" description="In isoform 4." evidence="10">
    <original>MSFPKAPLKRFNDPSGCAPSPGAYDVKTLEVLKGPVSFQKSQRFKQQKESKQNLNVDKDTTLPASARKVKSSESKESQKNDKDLKILEKE</original>
    <variation>MTLL</variation>
    <location>
        <begin position="1"/>
        <end position="90"/>
    </location>
</feature>
<feature type="splice variant" id="VSP_038378" description="In isoform 3." evidence="11 12">
    <original>K</original>
    <variation>KK</variation>
    <location>
        <position position="75"/>
    </location>
</feature>
<feature type="splice variant" id="VSP_004286" description="In isoform 2." evidence="10">
    <location>
        <begin position="76"/>
        <end position="90"/>
    </location>
</feature>
<feature type="sequence variant" id="VAR_024155" description="In dbSNP:rs299284." evidence="5">
    <original>R</original>
    <variation>C</variation>
    <location>
        <position position="92"/>
    </location>
</feature>
<feature type="sequence variant" id="VAR_031661" description="In dbSNP:rs2303077.">
    <original>N</original>
    <variation>K</variation>
    <location>
        <position position="305"/>
    </location>
</feature>
<feature type="sequence variant" id="VAR_056917" description="In dbSNP:rs2303077.">
    <original>N</original>
    <variation>K</variation>
    <location>
        <position position="320"/>
    </location>
</feature>
<feature type="sequence variant" id="VAR_024156" description="In dbSNP:rs2303078.">
    <original>R</original>
    <variation>H</variation>
    <location>
        <position position="332"/>
    </location>
</feature>
<feature type="sequence variant" id="VAR_020044" description="In dbSNP:rs299290." evidence="4 5">
    <original>V</original>
    <variation>A</variation>
    <location>
        <position position="368"/>
    </location>
</feature>
<feature type="sequence variant" id="VAR_024157" description="In dbSNP:rs299295." evidence="4 5">
    <original>A</original>
    <variation>V</variation>
    <location>
        <position position="484"/>
    </location>
</feature>
<feature type="sequence variant" id="VAR_056918" description="In dbSNP:rs2230362.">
    <original>D</original>
    <variation>H</variation>
    <location>
        <position position="557"/>
    </location>
</feature>
<feature type="sequence variant" id="VAR_056919" description="In dbSNP:rs2230363.">
    <original>L</original>
    <variation>I</variation>
    <location>
        <position position="595"/>
    </location>
</feature>
<feature type="sequence conflict" description="In Ref. 2; AAC32548." evidence="13" ref="2">
    <original>R</original>
    <variation>S</variation>
    <location>
        <position position="103"/>
    </location>
</feature>
<feature type="sequence conflict" description="In Ref. 1; AAC52049." evidence="13" ref="1">
    <original>E</original>
    <variation>D</variation>
    <location>
        <position position="277"/>
    </location>
</feature>
<feature type="sequence conflict" description="In Ref. 1; AAC52049." evidence="13" ref="1">
    <original>K</original>
    <variation>T</variation>
    <location>
        <position position="298"/>
    </location>
</feature>
<feature type="sequence conflict" description="In Ref. 1; AAC52049." evidence="13" ref="1">
    <original>K</original>
    <variation>E</variation>
    <location>
        <position position="322"/>
    </location>
</feature>
<feature type="sequence conflict" description="In Ref. 1; AAC52049." evidence="13" ref="1">
    <original>QER</original>
    <variation>REH</variation>
    <location>
        <begin position="330"/>
        <end position="332"/>
    </location>
</feature>
<feature type="sequence conflict" description="In Ref. 3; BAF83266." evidence="13" ref="3">
    <original>Q</original>
    <variation>R</variation>
    <location>
        <position position="547"/>
    </location>
</feature>
<evidence type="ECO:0000250" key="1">
    <source>
        <dbReference type="UniProtKB" id="Q00547"/>
    </source>
</evidence>
<evidence type="ECO:0000255" key="2"/>
<evidence type="ECO:0000256" key="3">
    <source>
        <dbReference type="SAM" id="MobiDB-lite"/>
    </source>
</evidence>
<evidence type="ECO:0000269" key="4">
    <source>
    </source>
</evidence>
<evidence type="ECO:0000269" key="5">
    <source>
    </source>
</evidence>
<evidence type="ECO:0000269" key="6">
    <source>
    </source>
</evidence>
<evidence type="ECO:0000269" key="7">
    <source>
    </source>
</evidence>
<evidence type="ECO:0000269" key="8">
    <source>
    </source>
</evidence>
<evidence type="ECO:0000269" key="9">
    <source>
    </source>
</evidence>
<evidence type="ECO:0000303" key="10">
    <source>
    </source>
</evidence>
<evidence type="ECO:0000303" key="11">
    <source>
    </source>
</evidence>
<evidence type="ECO:0000303" key="12">
    <source>
    </source>
</evidence>
<evidence type="ECO:0000305" key="13"/>
<evidence type="ECO:0007744" key="14">
    <source>
    </source>
</evidence>
<evidence type="ECO:0007744" key="15">
    <source>
    </source>
</evidence>
<proteinExistence type="evidence at protein level"/>
<comment type="function">
    <text evidence="1">Receptor for hyaluronic acid (HA) (By similarity). Involved in cell motility (By similarity). When hyaluronan binds to HMMR, the phosphorylation of a number of proteins, including PTK2/FAK1 occurs. May also be involved in cellular transformation and metastasis formation, and in regulating extracellular-regulated kinase (ERK) activity. May act as a regulator of adipogenisis (By similarity).</text>
</comment>
<comment type="subunit">
    <text evidence="6 7">Interacts with ANKRD26 (PubMed:22666460). Interacts with DYNLL1 (PubMed:22965910). Interacts with FAM83D/CHICA (PubMed:22965910).</text>
</comment>
<comment type="interaction">
    <interactant intactId="EBI-2556203">
        <id>O75330</id>
    </interactant>
    <interactant intactId="EBI-349905">
        <id>P38398</id>
        <label>BRCA1</label>
    </interactant>
    <organismsDiffer>false</organismsDiffer>
    <experiments>4</experiments>
</comment>
<comment type="interaction">
    <interactant intactId="EBI-2556203">
        <id>O75330</id>
    </interactant>
    <interactant intactId="EBI-349854">
        <id>P13569</id>
        <label>CFTR</label>
    </interactant>
    <organismsDiffer>false</organismsDiffer>
    <experiments>7</experiments>
</comment>
<comment type="interaction">
    <interactant intactId="EBI-2556203">
        <id>O75330</id>
    </interactant>
    <interactant intactId="EBI-2556127">
        <id>Q9H4H8</id>
        <label>FAM83D</label>
    </interactant>
    <organismsDiffer>false</organismsDiffer>
    <experiments>3</experiments>
</comment>
<comment type="interaction">
    <interactant intactId="EBI-2556203">
        <id>O75330</id>
    </interactant>
    <interactant intactId="EBI-10269566">
        <id>Q8NDC4</id>
        <label>MORN4</label>
    </interactant>
    <organismsDiffer>false</organismsDiffer>
    <experiments>4</experiments>
</comment>
<comment type="interaction">
    <interactant intactId="EBI-2556203">
        <id>O75330</id>
    </interactant>
    <interactant intactId="EBI-1037322">
        <id>Q9ULW0</id>
        <label>TPX2</label>
    </interactant>
    <organismsDiffer>false</organismsDiffer>
    <experiments>5</experiments>
</comment>
<comment type="interaction">
    <interactant intactId="EBI-12098658">
        <id>O75330-3</id>
    </interactant>
    <interactant intactId="EBI-946046">
        <id>P54252</id>
        <label>ATXN3</label>
    </interactant>
    <organismsDiffer>false</organismsDiffer>
    <experiments>3</experiments>
</comment>
<comment type="interaction">
    <interactant intactId="EBI-12098658">
        <id>O75330-3</id>
    </interactant>
    <interactant intactId="EBI-10269566">
        <id>Q8NDC4</id>
        <label>MORN4</label>
    </interactant>
    <organismsDiffer>false</organismsDiffer>
    <experiments>3</experiments>
</comment>
<comment type="interaction">
    <interactant intactId="EBI-12098658">
        <id>O75330-3</id>
    </interactant>
    <interactant intactId="EBI-720609">
        <id>O76024</id>
        <label>WFS1</label>
    </interactant>
    <organismsDiffer>false</organismsDiffer>
    <experiments>3</experiments>
</comment>
<comment type="subcellular location">
    <subcellularLocation>
        <location evidence="1">Cell surface</location>
    </subcellularLocation>
    <subcellularLocation>
        <location evidence="8">Cytoplasm</location>
    </subcellularLocation>
    <subcellularLocation>
        <location evidence="1">Cytoplasm</location>
        <location evidence="1">Cytoskeleton</location>
        <location evidence="1">Spindle</location>
    </subcellularLocation>
</comment>
<comment type="alternative products">
    <event type="alternative splicing"/>
    <isoform>
        <id>O75330-1</id>
        <name>1</name>
        <name>A</name>
        <sequence type="displayed"/>
    </isoform>
    <isoform>
        <id>O75330-2</id>
        <name>2</name>
        <name>B</name>
        <sequence type="described" ref="VSP_004286"/>
    </isoform>
    <isoform>
        <id>O75330-3</id>
        <name>3</name>
        <sequence type="described" ref="VSP_038378"/>
    </isoform>
    <isoform>
        <id>O75330-4</id>
        <name>4</name>
        <sequence type="described" ref="VSP_041266"/>
    </isoform>
</comment>
<comment type="tissue specificity">
    <text evidence="7 9">Expressed in testis (PubMed:22965910). Expressed in the breast (PubMed:8890751).</text>
</comment>
<protein>
    <recommendedName>
        <fullName>Hyaluronan mediated motility receptor</fullName>
    </recommendedName>
    <alternativeName>
        <fullName>Intracellular hyaluronic acid-binding protein</fullName>
    </alternativeName>
    <alternativeName>
        <fullName>Receptor for hyaluronan-mediated motility</fullName>
    </alternativeName>
    <cdAntigenName>CD168</cdAntigenName>
</protein>
<dbReference type="EMBL" id="U29343">
    <property type="protein sequence ID" value="AAC52049.1"/>
    <property type="molecule type" value="mRNA"/>
</dbReference>
<dbReference type="EMBL" id="AF032862">
    <property type="protein sequence ID" value="AAC32548.1"/>
    <property type="molecule type" value="mRNA"/>
</dbReference>
<dbReference type="EMBL" id="AK290577">
    <property type="protein sequence ID" value="BAF83266.1"/>
    <property type="molecule type" value="mRNA"/>
</dbReference>
<dbReference type="EMBL" id="AK303616">
    <property type="protein sequence ID" value="BAG64626.1"/>
    <property type="molecule type" value="mRNA"/>
</dbReference>
<dbReference type="EMBL" id="AC112205">
    <property type="status" value="NOT_ANNOTATED_CDS"/>
    <property type="molecule type" value="Genomic_DNA"/>
</dbReference>
<dbReference type="EMBL" id="CH471062">
    <property type="protein sequence ID" value="EAW61522.1"/>
    <property type="molecule type" value="Genomic_DNA"/>
</dbReference>
<dbReference type="EMBL" id="CH471062">
    <property type="protein sequence ID" value="EAW61523.1"/>
    <property type="molecule type" value="Genomic_DNA"/>
</dbReference>
<dbReference type="EMBL" id="CH471062">
    <property type="protein sequence ID" value="EAW61524.1"/>
    <property type="molecule type" value="Genomic_DNA"/>
</dbReference>
<dbReference type="EMBL" id="CH471062">
    <property type="protein sequence ID" value="EAW61525.1"/>
    <property type="molecule type" value="Genomic_DNA"/>
</dbReference>
<dbReference type="EMBL" id="BC108904">
    <property type="protein sequence ID" value="AAI08905.1"/>
    <property type="molecule type" value="mRNA"/>
</dbReference>
<dbReference type="CCDS" id="CCDS4362.1">
    <molecule id="O75330-1"/>
</dbReference>
<dbReference type="CCDS" id="CCDS4363.1">
    <molecule id="O75330-2"/>
</dbReference>
<dbReference type="CCDS" id="CCDS47334.1">
    <molecule id="O75330-3"/>
</dbReference>
<dbReference type="CCDS" id="CCDS47335.1">
    <molecule id="O75330-4"/>
</dbReference>
<dbReference type="PIR" id="JC5016">
    <property type="entry name" value="JC5016"/>
</dbReference>
<dbReference type="RefSeq" id="NP_001136028.1">
    <molecule id="O75330-3"/>
    <property type="nucleotide sequence ID" value="NM_001142556.2"/>
</dbReference>
<dbReference type="RefSeq" id="NP_001136029.1">
    <molecule id="O75330-4"/>
    <property type="nucleotide sequence ID" value="NM_001142557.2"/>
</dbReference>
<dbReference type="RefSeq" id="NP_036616.2">
    <molecule id="O75330-1"/>
    <property type="nucleotide sequence ID" value="NM_012484.3"/>
</dbReference>
<dbReference type="RefSeq" id="NP_036617.2">
    <molecule id="O75330-2"/>
    <property type="nucleotide sequence ID" value="NM_012485.3"/>
</dbReference>
<dbReference type="SMR" id="O75330"/>
<dbReference type="BioGRID" id="109404">
    <property type="interactions" value="115"/>
</dbReference>
<dbReference type="CORUM" id="O75330"/>
<dbReference type="DIP" id="DIP-56496N"/>
<dbReference type="FunCoup" id="O75330">
    <property type="interactions" value="1139"/>
</dbReference>
<dbReference type="IntAct" id="O75330">
    <property type="interactions" value="79"/>
</dbReference>
<dbReference type="MINT" id="O75330"/>
<dbReference type="STRING" id="9606.ENSP00000377492"/>
<dbReference type="BindingDB" id="O75330"/>
<dbReference type="ChEMBL" id="CHEMBL4295676"/>
<dbReference type="DrugBank" id="DB08818">
    <property type="generic name" value="Hyaluronic acid"/>
</dbReference>
<dbReference type="MoonDB" id="O75330">
    <property type="type" value="Curated"/>
</dbReference>
<dbReference type="GlyCosmos" id="O75330">
    <property type="glycosylation" value="4 sites, No reported glycans"/>
</dbReference>
<dbReference type="GlyGen" id="O75330">
    <property type="glycosylation" value="5 sites, 1 O-linked glycan (1 site)"/>
</dbReference>
<dbReference type="iPTMnet" id="O75330"/>
<dbReference type="PhosphoSitePlus" id="O75330"/>
<dbReference type="BioMuta" id="HMMR"/>
<dbReference type="REPRODUCTION-2DPAGE" id="O75330"/>
<dbReference type="jPOST" id="O75330"/>
<dbReference type="MassIVE" id="O75330"/>
<dbReference type="PaxDb" id="9606-ENSP00000377492"/>
<dbReference type="PeptideAtlas" id="O75330"/>
<dbReference type="ProteomicsDB" id="49897">
    <molecule id="O75330-1"/>
</dbReference>
<dbReference type="ProteomicsDB" id="49898">
    <molecule id="O75330-2"/>
</dbReference>
<dbReference type="ProteomicsDB" id="49899">
    <molecule id="O75330-3"/>
</dbReference>
<dbReference type="ProteomicsDB" id="49900">
    <molecule id="O75330-4"/>
</dbReference>
<dbReference type="Pumba" id="O75330"/>
<dbReference type="Antibodypedia" id="39622">
    <property type="antibodies" value="463 antibodies from 41 providers"/>
</dbReference>
<dbReference type="DNASU" id="3161"/>
<dbReference type="Ensembl" id="ENST00000353866.7">
    <molecule id="O75330-2"/>
    <property type="protein sequence ID" value="ENSP00000185942.6"/>
    <property type="gene ID" value="ENSG00000072571.20"/>
</dbReference>
<dbReference type="Ensembl" id="ENST00000358715.3">
    <molecule id="O75330-1"/>
    <property type="protein sequence ID" value="ENSP00000351554.3"/>
    <property type="gene ID" value="ENSG00000072571.20"/>
</dbReference>
<dbReference type="Ensembl" id="ENST00000393915.9">
    <molecule id="O75330-3"/>
    <property type="protein sequence ID" value="ENSP00000377492.4"/>
    <property type="gene ID" value="ENSG00000072571.20"/>
</dbReference>
<dbReference type="Ensembl" id="ENST00000432118.6">
    <molecule id="O75330-4"/>
    <property type="protein sequence ID" value="ENSP00000402673.2"/>
    <property type="gene ID" value="ENSG00000072571.20"/>
</dbReference>
<dbReference type="GeneID" id="3161"/>
<dbReference type="KEGG" id="hsa:3161"/>
<dbReference type="MANE-Select" id="ENST00000393915.9">
    <molecule id="O75330-3"/>
    <property type="protein sequence ID" value="ENSP00000377492.4"/>
    <property type="RefSeq nucleotide sequence ID" value="NM_001142556.2"/>
    <property type="RefSeq protein sequence ID" value="NP_001136028.1"/>
</dbReference>
<dbReference type="UCSC" id="uc003lzf.5">
    <molecule id="O75330-1"/>
    <property type="organism name" value="human"/>
</dbReference>
<dbReference type="AGR" id="HGNC:5012"/>
<dbReference type="CTD" id="3161"/>
<dbReference type="DisGeNET" id="3161"/>
<dbReference type="GeneCards" id="HMMR"/>
<dbReference type="HGNC" id="HGNC:5012">
    <property type="gene designation" value="HMMR"/>
</dbReference>
<dbReference type="HPA" id="ENSG00000072571">
    <property type="expression patterns" value="Tissue enhanced (bone marrow, lymphoid tissue, testis)"/>
</dbReference>
<dbReference type="MalaCards" id="HMMR"/>
<dbReference type="MIM" id="600936">
    <property type="type" value="gene"/>
</dbReference>
<dbReference type="neXtProt" id="NX_O75330"/>
<dbReference type="OpenTargets" id="ENSG00000072571"/>
<dbReference type="PharmGKB" id="PA29340"/>
<dbReference type="VEuPathDB" id="HostDB:ENSG00000072571"/>
<dbReference type="eggNOG" id="ENOG502QQJM">
    <property type="taxonomic scope" value="Eukaryota"/>
</dbReference>
<dbReference type="GeneTree" id="ENSGT00390000007135"/>
<dbReference type="HOGENOM" id="CLU_009698_0_0_1"/>
<dbReference type="InParanoid" id="O75330"/>
<dbReference type="OMA" id="NEAPTCA"/>
<dbReference type="OrthoDB" id="419631at2759"/>
<dbReference type="PAN-GO" id="O75330">
    <property type="GO annotations" value="0 GO annotations based on evolutionary models"/>
</dbReference>
<dbReference type="PhylomeDB" id="O75330"/>
<dbReference type="TreeFam" id="TF333963"/>
<dbReference type="PathwayCommons" id="O75330"/>
<dbReference type="Reactome" id="R-HSA-2160916">
    <property type="pathway name" value="Hyaluronan uptake and degradation"/>
</dbReference>
<dbReference type="Reactome" id="R-HSA-8854518">
    <property type="pathway name" value="AURKA Activation by TPX2"/>
</dbReference>
<dbReference type="SignaLink" id="O75330"/>
<dbReference type="BioGRID-ORCS" id="3161">
    <property type="hits" value="26 hits in 1169 CRISPR screens"/>
</dbReference>
<dbReference type="CD-CODE" id="8C2F96ED">
    <property type="entry name" value="Centrosome"/>
</dbReference>
<dbReference type="ChiTaRS" id="HMMR">
    <property type="organism name" value="human"/>
</dbReference>
<dbReference type="GeneWiki" id="Hyaluronan-mediated_motility_receptor"/>
<dbReference type="GenomeRNAi" id="3161"/>
<dbReference type="Pharos" id="O75330">
    <property type="development level" value="Tchem"/>
</dbReference>
<dbReference type="PRO" id="PR:O75330"/>
<dbReference type="Proteomes" id="UP000005640">
    <property type="component" value="Chromosome 5"/>
</dbReference>
<dbReference type="RNAct" id="O75330">
    <property type="molecule type" value="protein"/>
</dbReference>
<dbReference type="Bgee" id="ENSG00000072571">
    <property type="expression patterns" value="Expressed in sperm and 136 other cell types or tissues"/>
</dbReference>
<dbReference type="ExpressionAtlas" id="O75330">
    <property type="expression patterns" value="baseline and differential"/>
</dbReference>
<dbReference type="GO" id="GO:0009986">
    <property type="term" value="C:cell surface"/>
    <property type="evidence" value="ECO:0007669"/>
    <property type="project" value="UniProtKB-SubCell"/>
</dbReference>
<dbReference type="GO" id="GO:0005813">
    <property type="term" value="C:centrosome"/>
    <property type="evidence" value="ECO:0000314"/>
    <property type="project" value="HPA"/>
</dbReference>
<dbReference type="GO" id="GO:0005737">
    <property type="term" value="C:cytoplasm"/>
    <property type="evidence" value="ECO:0000314"/>
    <property type="project" value="UniProtKB"/>
</dbReference>
<dbReference type="GO" id="GO:0005829">
    <property type="term" value="C:cytosol"/>
    <property type="evidence" value="ECO:0000314"/>
    <property type="project" value="HPA"/>
</dbReference>
<dbReference type="GO" id="GO:0016020">
    <property type="term" value="C:membrane"/>
    <property type="evidence" value="ECO:0007005"/>
    <property type="project" value="UniProtKB"/>
</dbReference>
<dbReference type="GO" id="GO:0015630">
    <property type="term" value="C:microtubule cytoskeleton"/>
    <property type="evidence" value="ECO:0000314"/>
    <property type="project" value="HPA"/>
</dbReference>
<dbReference type="GO" id="GO:0005886">
    <property type="term" value="C:plasma membrane"/>
    <property type="evidence" value="ECO:0000304"/>
    <property type="project" value="Reactome"/>
</dbReference>
<dbReference type="GO" id="GO:0005819">
    <property type="term" value="C:spindle"/>
    <property type="evidence" value="ECO:0000314"/>
    <property type="project" value="UniProtKB"/>
</dbReference>
<dbReference type="GO" id="GO:0038024">
    <property type="term" value="F:cargo receptor activity"/>
    <property type="evidence" value="ECO:0007669"/>
    <property type="project" value="Ensembl"/>
</dbReference>
<dbReference type="GO" id="GO:0005540">
    <property type="term" value="F:hyaluronic acid binding"/>
    <property type="evidence" value="ECO:0007669"/>
    <property type="project" value="UniProtKB-KW"/>
</dbReference>
<dbReference type="GO" id="GO:0030214">
    <property type="term" value="P:hyaluronan catabolic process"/>
    <property type="evidence" value="ECO:0007669"/>
    <property type="project" value="Ensembl"/>
</dbReference>
<dbReference type="GO" id="GO:0006898">
    <property type="term" value="P:receptor-mediated endocytosis"/>
    <property type="evidence" value="ECO:0007669"/>
    <property type="project" value="Ensembl"/>
</dbReference>
<dbReference type="InterPro" id="IPR031794">
    <property type="entry name" value="HMMR_C"/>
</dbReference>
<dbReference type="InterPro" id="IPR026203">
    <property type="entry name" value="IHABP"/>
</dbReference>
<dbReference type="PANTHER" id="PTHR18956">
    <property type="entry name" value="HYALURONAN MEDIATED MOTILITY RECEPTOR"/>
    <property type="match status" value="1"/>
</dbReference>
<dbReference type="PANTHER" id="PTHR18956:SF6">
    <property type="entry name" value="HYALURONAN MEDIATED MOTILITY RECEPTOR"/>
    <property type="match status" value="1"/>
</dbReference>
<dbReference type="Pfam" id="PF15908">
    <property type="entry name" value="HMMR_C"/>
    <property type="match status" value="1"/>
</dbReference>
<dbReference type="Pfam" id="PF15905">
    <property type="entry name" value="HMMR_N"/>
    <property type="match status" value="1"/>
</dbReference>
<keyword id="KW-0025">Alternative splicing</keyword>
<keyword id="KW-0963">Cytoplasm</keyword>
<keyword id="KW-0206">Cytoskeleton</keyword>
<keyword id="KW-0325">Glycoprotein</keyword>
<keyword id="KW-0373">Hyaluronic acid</keyword>
<keyword id="KW-0597">Phosphoprotein</keyword>
<keyword id="KW-1267">Proteomics identification</keyword>
<keyword id="KW-1185">Reference proteome</keyword>
<keyword id="KW-0677">Repeat</keyword>
<gene>
    <name type="primary">HMMR</name>
    <name type="synonym">IHABP</name>
    <name type="synonym">RHAMM</name>
</gene>
<sequence>MSFPKAPLKRFNDPSGCAPSPGAYDVKTLEVLKGPVSFQKSQRFKQQKESKQNLNVDKDTTLPASARKVKSSESKESQKNDKDLKILEKEIRVLLQERGAQDRRIQDLETELEKMEARLNAALREKTSLSANNATLEKQLIELTRTNELLKSKFSENGNQKNLRILSLELMKLRNKRETKMRGMMAKQEGMEMKLQVTQRSLEESQGKIAQLEGKLVSIEKEKIDEKSETEKLLEYIEEISCASDQVEKYKLDIAQLEENLKEKNDEILSLKQSLEENIVILSKQVEDLNVKCQLLEKEKEDHVNRNREHNENLNAEMQNLKQKFILEQQEREKLQQKELQIDSLLQQEKELSSSLHQKLCSFQEEMVKEKNLFEEELKQTLDELDKLQQKEEQAERLVKQLEEEAKSRAEELKLLEEKLKGKEAELEKSSAAHTQATLLLQEKYDSMVQSLEDVTAQFESYKALTASEIEDLKLENSSLQEKAAKAGKNAEDVQHQILATESSNQEYVRMLLDLQTKSALKETEIKEITVSFLQKITDLQNQLKQQEEDFRKQLEDEEGRKAEKENTTAELTEEINKWRLLYEELYNKTKPFQLQLDAFEVEKQALLNEHGAAQEQLNKIRDSYAKLLGHQNLKQKIKHVVKLKDENSQLKSEVSKLRCQLAKKKQSETKLQEELNKVLGIKHFDPSKAFHHESKENFALKTPLKEGNTNCYRAPMECQESWK</sequence>
<reference key="1">
    <citation type="journal article" date="1996" name="Gene">
        <title>The characterization of a human RHAMM cDNA: conservation of the hyaluronan-binding domains.</title>
        <authorList>
            <person name="Wang C."/>
            <person name="Entwistle J."/>
            <person name="Hou G."/>
            <person name="Li Q."/>
            <person name="Turley E.A."/>
        </authorList>
    </citation>
    <scope>NUCLEOTIDE SEQUENCE [MRNA] (ISOFORM 3)</scope>
    <scope>TISSUE SPECIFICITY</scope>
    <source>
        <tissue>Mammary gland</tissue>
    </source>
</reference>
<reference key="2">
    <citation type="journal article" date="1998" name="J. Cell Sci.">
        <title>The human hyaluronan receptor RHAMM is expressed as an intracellular protein in breast cancer cells.</title>
        <authorList>
            <person name="Assmann V."/>
            <person name="Marshall J.F."/>
            <person name="Fieber C."/>
            <person name="Hofmann M."/>
            <person name="Hart I.R."/>
        </authorList>
    </citation>
    <scope>NUCLEOTIDE SEQUENCE [MRNA] (ISOFORM 1)</scope>
    <scope>ALTERNATIVE SPLICING (ISOFORM 2)</scope>
    <scope>CHARACTERIZATION</scope>
    <source>
        <tissue>Mammary carcinoma</tissue>
    </source>
</reference>
<reference key="3">
    <citation type="journal article" date="2004" name="Nat. Genet.">
        <title>Complete sequencing and characterization of 21,243 full-length human cDNAs.</title>
        <authorList>
            <person name="Ota T."/>
            <person name="Suzuki Y."/>
            <person name="Nishikawa T."/>
            <person name="Otsuki T."/>
            <person name="Sugiyama T."/>
            <person name="Irie R."/>
            <person name="Wakamatsu A."/>
            <person name="Hayashi K."/>
            <person name="Sato H."/>
            <person name="Nagai K."/>
            <person name="Kimura K."/>
            <person name="Makita H."/>
            <person name="Sekine M."/>
            <person name="Obayashi M."/>
            <person name="Nishi T."/>
            <person name="Shibahara T."/>
            <person name="Tanaka T."/>
            <person name="Ishii S."/>
            <person name="Yamamoto J."/>
            <person name="Saito K."/>
            <person name="Kawai Y."/>
            <person name="Isono Y."/>
            <person name="Nakamura Y."/>
            <person name="Nagahari K."/>
            <person name="Murakami K."/>
            <person name="Yasuda T."/>
            <person name="Iwayanagi T."/>
            <person name="Wagatsuma M."/>
            <person name="Shiratori A."/>
            <person name="Sudo H."/>
            <person name="Hosoiri T."/>
            <person name="Kaku Y."/>
            <person name="Kodaira H."/>
            <person name="Kondo H."/>
            <person name="Sugawara M."/>
            <person name="Takahashi M."/>
            <person name="Kanda K."/>
            <person name="Yokoi T."/>
            <person name="Furuya T."/>
            <person name="Kikkawa E."/>
            <person name="Omura Y."/>
            <person name="Abe K."/>
            <person name="Kamihara K."/>
            <person name="Katsuta N."/>
            <person name="Sato K."/>
            <person name="Tanikawa M."/>
            <person name="Yamazaki M."/>
            <person name="Ninomiya K."/>
            <person name="Ishibashi T."/>
            <person name="Yamashita H."/>
            <person name="Murakawa K."/>
            <person name="Fujimori K."/>
            <person name="Tanai H."/>
            <person name="Kimata M."/>
            <person name="Watanabe M."/>
            <person name="Hiraoka S."/>
            <person name="Chiba Y."/>
            <person name="Ishida S."/>
            <person name="Ono Y."/>
            <person name="Takiguchi S."/>
            <person name="Watanabe S."/>
            <person name="Yosida M."/>
            <person name="Hotuta T."/>
            <person name="Kusano J."/>
            <person name="Kanehori K."/>
            <person name="Takahashi-Fujii A."/>
            <person name="Hara H."/>
            <person name="Tanase T.-O."/>
            <person name="Nomura Y."/>
            <person name="Togiya S."/>
            <person name="Komai F."/>
            <person name="Hara R."/>
            <person name="Takeuchi K."/>
            <person name="Arita M."/>
            <person name="Imose N."/>
            <person name="Musashino K."/>
            <person name="Yuuki H."/>
            <person name="Oshima A."/>
            <person name="Sasaki N."/>
            <person name="Aotsuka S."/>
            <person name="Yoshikawa Y."/>
            <person name="Matsunawa H."/>
            <person name="Ichihara T."/>
            <person name="Shiohata N."/>
            <person name="Sano S."/>
            <person name="Moriya S."/>
            <person name="Momiyama H."/>
            <person name="Satoh N."/>
            <person name="Takami S."/>
            <person name="Terashima Y."/>
            <person name="Suzuki O."/>
            <person name="Nakagawa S."/>
            <person name="Senoh A."/>
            <person name="Mizoguchi H."/>
            <person name="Goto Y."/>
            <person name="Shimizu F."/>
            <person name="Wakebe H."/>
            <person name="Hishigaki H."/>
            <person name="Watanabe T."/>
            <person name="Sugiyama A."/>
            <person name="Takemoto M."/>
            <person name="Kawakami B."/>
            <person name="Yamazaki M."/>
            <person name="Watanabe K."/>
            <person name="Kumagai A."/>
            <person name="Itakura S."/>
            <person name="Fukuzumi Y."/>
            <person name="Fujimori Y."/>
            <person name="Komiyama M."/>
            <person name="Tashiro H."/>
            <person name="Tanigami A."/>
            <person name="Fujiwara T."/>
            <person name="Ono T."/>
            <person name="Yamada K."/>
            <person name="Fujii Y."/>
            <person name="Ozaki K."/>
            <person name="Hirao M."/>
            <person name="Ohmori Y."/>
            <person name="Kawabata A."/>
            <person name="Hikiji T."/>
            <person name="Kobatake N."/>
            <person name="Inagaki H."/>
            <person name="Ikema Y."/>
            <person name="Okamoto S."/>
            <person name="Okitani R."/>
            <person name="Kawakami T."/>
            <person name="Noguchi S."/>
            <person name="Itoh T."/>
            <person name="Shigeta K."/>
            <person name="Senba T."/>
            <person name="Matsumura K."/>
            <person name="Nakajima Y."/>
            <person name="Mizuno T."/>
            <person name="Morinaga M."/>
            <person name="Sasaki M."/>
            <person name="Togashi T."/>
            <person name="Oyama M."/>
            <person name="Hata H."/>
            <person name="Watanabe M."/>
            <person name="Komatsu T."/>
            <person name="Mizushima-Sugano J."/>
            <person name="Satoh T."/>
            <person name="Shirai Y."/>
            <person name="Takahashi Y."/>
            <person name="Nakagawa K."/>
            <person name="Okumura K."/>
            <person name="Nagase T."/>
            <person name="Nomura N."/>
            <person name="Kikuchi H."/>
            <person name="Masuho Y."/>
            <person name="Yamashita R."/>
            <person name="Nakai K."/>
            <person name="Yada T."/>
            <person name="Nakamura Y."/>
            <person name="Ohara O."/>
            <person name="Isogai T."/>
            <person name="Sugano S."/>
        </authorList>
    </citation>
    <scope>NUCLEOTIDE SEQUENCE [LARGE SCALE MRNA] (ISOFORMS 2 AND 4)</scope>
    <scope>VARIANTS ALA-368 AND VAL-484</scope>
    <source>
        <tissue>Thymus</tissue>
    </source>
</reference>
<reference key="4">
    <citation type="journal article" date="2004" name="Nature">
        <title>The DNA sequence and comparative analysis of human chromosome 5.</title>
        <authorList>
            <person name="Schmutz J."/>
            <person name="Martin J."/>
            <person name="Terry A."/>
            <person name="Couronne O."/>
            <person name="Grimwood J."/>
            <person name="Lowry S."/>
            <person name="Gordon L.A."/>
            <person name="Scott D."/>
            <person name="Xie G."/>
            <person name="Huang W."/>
            <person name="Hellsten U."/>
            <person name="Tran-Gyamfi M."/>
            <person name="She X."/>
            <person name="Prabhakar S."/>
            <person name="Aerts A."/>
            <person name="Altherr M."/>
            <person name="Bajorek E."/>
            <person name="Black S."/>
            <person name="Branscomb E."/>
            <person name="Caoile C."/>
            <person name="Challacombe J.F."/>
            <person name="Chan Y.M."/>
            <person name="Denys M."/>
            <person name="Detter J.C."/>
            <person name="Escobar J."/>
            <person name="Flowers D."/>
            <person name="Fotopulos D."/>
            <person name="Glavina T."/>
            <person name="Gomez M."/>
            <person name="Gonzales E."/>
            <person name="Goodstein D."/>
            <person name="Grigoriev I."/>
            <person name="Groza M."/>
            <person name="Hammon N."/>
            <person name="Hawkins T."/>
            <person name="Haydu L."/>
            <person name="Israni S."/>
            <person name="Jett J."/>
            <person name="Kadner K."/>
            <person name="Kimball H."/>
            <person name="Kobayashi A."/>
            <person name="Lopez F."/>
            <person name="Lou Y."/>
            <person name="Martinez D."/>
            <person name="Medina C."/>
            <person name="Morgan J."/>
            <person name="Nandkeshwar R."/>
            <person name="Noonan J.P."/>
            <person name="Pitluck S."/>
            <person name="Pollard M."/>
            <person name="Predki P."/>
            <person name="Priest J."/>
            <person name="Ramirez L."/>
            <person name="Retterer J."/>
            <person name="Rodriguez A."/>
            <person name="Rogers S."/>
            <person name="Salamov A."/>
            <person name="Salazar A."/>
            <person name="Thayer N."/>
            <person name="Tice H."/>
            <person name="Tsai M."/>
            <person name="Ustaszewska A."/>
            <person name="Vo N."/>
            <person name="Wheeler J."/>
            <person name="Wu K."/>
            <person name="Yang J."/>
            <person name="Dickson M."/>
            <person name="Cheng J.-F."/>
            <person name="Eichler E.E."/>
            <person name="Olsen A."/>
            <person name="Pennacchio L.A."/>
            <person name="Rokhsar D.S."/>
            <person name="Richardson P."/>
            <person name="Lucas S.M."/>
            <person name="Myers R.M."/>
            <person name="Rubin E.M."/>
        </authorList>
    </citation>
    <scope>NUCLEOTIDE SEQUENCE [LARGE SCALE GENOMIC DNA]</scope>
</reference>
<reference key="5">
    <citation type="submission" date="2005-09" db="EMBL/GenBank/DDBJ databases">
        <authorList>
            <person name="Mural R.J."/>
            <person name="Istrail S."/>
            <person name="Sutton G.G."/>
            <person name="Florea L."/>
            <person name="Halpern A.L."/>
            <person name="Mobarry C.M."/>
            <person name="Lippert R."/>
            <person name="Walenz B."/>
            <person name="Shatkay H."/>
            <person name="Dew I."/>
            <person name="Miller J.R."/>
            <person name="Flanigan M.J."/>
            <person name="Edwards N.J."/>
            <person name="Bolanos R."/>
            <person name="Fasulo D."/>
            <person name="Halldorsson B.V."/>
            <person name="Hannenhalli S."/>
            <person name="Turner R."/>
            <person name="Yooseph S."/>
            <person name="Lu F."/>
            <person name="Nusskern D.R."/>
            <person name="Shue B.C."/>
            <person name="Zheng X.H."/>
            <person name="Zhong F."/>
            <person name="Delcher A.L."/>
            <person name="Huson D.H."/>
            <person name="Kravitz S.A."/>
            <person name="Mouchard L."/>
            <person name="Reinert K."/>
            <person name="Remington K.A."/>
            <person name="Clark A.G."/>
            <person name="Waterman M.S."/>
            <person name="Eichler E.E."/>
            <person name="Adams M.D."/>
            <person name="Hunkapiller M.W."/>
            <person name="Myers E.W."/>
            <person name="Venter J.C."/>
        </authorList>
    </citation>
    <scope>NUCLEOTIDE SEQUENCE [LARGE SCALE GENOMIC DNA]</scope>
</reference>
<reference key="6">
    <citation type="journal article" date="2004" name="Genome Res.">
        <title>The status, quality, and expansion of the NIH full-length cDNA project: the Mammalian Gene Collection (MGC).</title>
        <authorList>
            <consortium name="The MGC Project Team"/>
        </authorList>
    </citation>
    <scope>NUCLEOTIDE SEQUENCE [LARGE SCALE MRNA] (ISOFORM 3)</scope>
    <scope>VARIANTS CYS-92; ALA-368 AND VAL-484</scope>
</reference>
<reference key="7">
    <citation type="journal article" date="2008" name="Proc. Natl. Acad. Sci. U.S.A.">
        <title>A quantitative atlas of mitotic phosphorylation.</title>
        <authorList>
            <person name="Dephoure N."/>
            <person name="Zhou C."/>
            <person name="Villen J."/>
            <person name="Beausoleil S.A."/>
            <person name="Bakalarski C.E."/>
            <person name="Elledge S.J."/>
            <person name="Gygi S.P."/>
        </authorList>
    </citation>
    <scope>PHOSPHORYLATION [LARGE SCALE ANALYSIS] AT SER-20</scope>
    <scope>IDENTIFICATION BY MASS SPECTROMETRY [LARGE SCALE ANALYSIS]</scope>
    <source>
        <tissue>Cervix carcinoma</tissue>
    </source>
</reference>
<reference key="8">
    <citation type="journal article" date="2011" name="BMC Syst. Biol.">
        <title>Initial characterization of the human central proteome.</title>
        <authorList>
            <person name="Burkard T.R."/>
            <person name="Planyavsky M."/>
            <person name="Kaupe I."/>
            <person name="Breitwieser F.P."/>
            <person name="Buerckstuemmer T."/>
            <person name="Bennett K.L."/>
            <person name="Superti-Furga G."/>
            <person name="Colinge J."/>
        </authorList>
    </citation>
    <scope>IDENTIFICATION BY MASS SPECTROMETRY [LARGE SCALE ANALYSIS]</scope>
</reference>
<reference key="9">
    <citation type="journal article" date="2012" name="J. Cell Biol.">
        <title>Dynein light chain 1 and a spindle-associated adaptor promote dynein asymmetry and spindle orientation.</title>
        <authorList>
            <person name="Dunsch A.K."/>
            <person name="Hammond D."/>
            <person name="Lloyd J."/>
            <person name="Schermelleh L."/>
            <person name="Gruneberg U."/>
            <person name="Barr F.A."/>
        </authorList>
    </citation>
    <scope>INTERACTION WITH DYNLL1 AND FAM83D</scope>
    <scope>TISSUE SPECIFICITY</scope>
</reference>
<reference key="10">
    <citation type="journal article" date="2012" name="PLoS ONE">
        <title>ANKRD26 and its interacting partners TRIO, GPS2, HMMR and DIPA regulate adipogenesis in 3T3-L1 cells.</title>
        <authorList>
            <person name="Liu X.F."/>
            <person name="Bera T.K."/>
            <person name="Kahue C."/>
            <person name="Escobar T."/>
            <person name="Fei Z."/>
            <person name="Raciti G.A."/>
            <person name="Pastan I."/>
        </authorList>
    </citation>
    <scope>INTERACTION WITH ANKRD26</scope>
</reference>
<reference key="11">
    <citation type="journal article" date="2013" name="J. Proteome Res.">
        <title>Toward a comprehensive characterization of a human cancer cell phosphoproteome.</title>
        <authorList>
            <person name="Zhou H."/>
            <person name="Di Palma S."/>
            <person name="Preisinger C."/>
            <person name="Peng M."/>
            <person name="Polat A.N."/>
            <person name="Heck A.J."/>
            <person name="Mohammed S."/>
        </authorList>
    </citation>
    <scope>PHOSPHORYLATION [LARGE SCALE ANALYSIS] AT THR-703</scope>
    <scope>IDENTIFICATION BY MASS SPECTROMETRY [LARGE SCALE ANALYSIS]</scope>
    <source>
        <tissue>Cervix carcinoma</tissue>
        <tissue>Erythroleukemia</tissue>
    </source>
</reference>
<reference key="12">
    <citation type="journal article" date="2019" name="J. Proteome Res.">
        <title>Cell Type-Specific Expression of Testis Elevated Genes Based on Transcriptomics and Antibody-Based Proteomics.</title>
        <authorList>
            <person name="Pineau C."/>
            <person name="Hikmet F."/>
            <person name="Zhang C."/>
            <person name="Oksvold P."/>
            <person name="Chen S."/>
            <person name="Fagerberg L."/>
            <person name="Uhlen M."/>
            <person name="Lindskog C."/>
        </authorList>
    </citation>
    <scope>SUBCELLULAR LOCATION</scope>
</reference>
<accession>O75330</accession>
<accession>A8K3G2</accession>
<accession>B4E114</accession>
<accession>D3DQK9</accession>
<accession>D3DQL0</accession>
<accession>E9PCS0</accession>
<accession>Q32N02</accession>
<accession>Q92767</accession>